<proteinExistence type="inferred from homology"/>
<accession>B1YS10</accession>
<protein>
    <recommendedName>
        <fullName evidence="1">2-C-methyl-D-erythritol 2,4-cyclodiphosphate synthase</fullName>
        <shortName evidence="1">MECDP-synthase</shortName>
        <shortName evidence="1">MECPP-synthase</shortName>
        <shortName evidence="1">MECPS</shortName>
        <ecNumber evidence="1">4.6.1.12</ecNumber>
    </recommendedName>
</protein>
<dbReference type="EC" id="4.6.1.12" evidence="1"/>
<dbReference type="EMBL" id="CP001025">
    <property type="protein sequence ID" value="ACB64339.1"/>
    <property type="molecule type" value="Genomic_DNA"/>
</dbReference>
<dbReference type="RefSeq" id="WP_012364088.1">
    <property type="nucleotide sequence ID" value="NC_010551.1"/>
</dbReference>
<dbReference type="SMR" id="B1YS10"/>
<dbReference type="KEGG" id="bac:BamMC406_1857"/>
<dbReference type="HOGENOM" id="CLU_084630_2_0_4"/>
<dbReference type="OrthoDB" id="9804336at2"/>
<dbReference type="UniPathway" id="UPA00056">
    <property type="reaction ID" value="UER00095"/>
</dbReference>
<dbReference type="Proteomes" id="UP000001680">
    <property type="component" value="Chromosome 1"/>
</dbReference>
<dbReference type="GO" id="GO:0008685">
    <property type="term" value="F:2-C-methyl-D-erythritol 2,4-cyclodiphosphate synthase activity"/>
    <property type="evidence" value="ECO:0007669"/>
    <property type="project" value="UniProtKB-UniRule"/>
</dbReference>
<dbReference type="GO" id="GO:0046872">
    <property type="term" value="F:metal ion binding"/>
    <property type="evidence" value="ECO:0007669"/>
    <property type="project" value="UniProtKB-KW"/>
</dbReference>
<dbReference type="GO" id="GO:0019288">
    <property type="term" value="P:isopentenyl diphosphate biosynthetic process, methylerythritol 4-phosphate pathway"/>
    <property type="evidence" value="ECO:0007669"/>
    <property type="project" value="UniProtKB-UniRule"/>
</dbReference>
<dbReference type="GO" id="GO:0016114">
    <property type="term" value="P:terpenoid biosynthetic process"/>
    <property type="evidence" value="ECO:0007669"/>
    <property type="project" value="InterPro"/>
</dbReference>
<dbReference type="CDD" id="cd00554">
    <property type="entry name" value="MECDP_synthase"/>
    <property type="match status" value="1"/>
</dbReference>
<dbReference type="FunFam" id="3.30.1330.50:FF:000001">
    <property type="entry name" value="2-C-methyl-D-erythritol 2,4-cyclodiphosphate synthase"/>
    <property type="match status" value="1"/>
</dbReference>
<dbReference type="Gene3D" id="3.30.1330.50">
    <property type="entry name" value="2-C-methyl-D-erythritol 2,4-cyclodiphosphate synthase"/>
    <property type="match status" value="1"/>
</dbReference>
<dbReference type="HAMAP" id="MF_00107">
    <property type="entry name" value="IspF"/>
    <property type="match status" value="1"/>
</dbReference>
<dbReference type="InterPro" id="IPR003526">
    <property type="entry name" value="MECDP_synthase"/>
</dbReference>
<dbReference type="InterPro" id="IPR020555">
    <property type="entry name" value="MECDP_synthase_CS"/>
</dbReference>
<dbReference type="InterPro" id="IPR036571">
    <property type="entry name" value="MECDP_synthase_sf"/>
</dbReference>
<dbReference type="NCBIfam" id="TIGR00151">
    <property type="entry name" value="ispF"/>
    <property type="match status" value="1"/>
</dbReference>
<dbReference type="PANTHER" id="PTHR43181">
    <property type="entry name" value="2-C-METHYL-D-ERYTHRITOL 2,4-CYCLODIPHOSPHATE SYNTHASE, CHLOROPLASTIC"/>
    <property type="match status" value="1"/>
</dbReference>
<dbReference type="PANTHER" id="PTHR43181:SF1">
    <property type="entry name" value="2-C-METHYL-D-ERYTHRITOL 2,4-CYCLODIPHOSPHATE SYNTHASE, CHLOROPLASTIC"/>
    <property type="match status" value="1"/>
</dbReference>
<dbReference type="Pfam" id="PF02542">
    <property type="entry name" value="YgbB"/>
    <property type="match status" value="1"/>
</dbReference>
<dbReference type="SUPFAM" id="SSF69765">
    <property type="entry name" value="IpsF-like"/>
    <property type="match status" value="1"/>
</dbReference>
<dbReference type="PROSITE" id="PS01350">
    <property type="entry name" value="ISPF"/>
    <property type="match status" value="1"/>
</dbReference>
<name>ISPF_BURA4</name>
<comment type="function">
    <text evidence="1">Involved in the biosynthesis of isopentenyl diphosphate (IPP) and dimethylallyl diphosphate (DMAPP), two major building blocks of isoprenoid compounds. Catalyzes the conversion of 4-diphosphocytidyl-2-C-methyl-D-erythritol 2-phosphate (CDP-ME2P) to 2-C-methyl-D-erythritol 2,4-cyclodiphosphate (ME-CPP) with a corresponding release of cytidine 5-monophosphate (CMP).</text>
</comment>
<comment type="catalytic activity">
    <reaction evidence="1">
        <text>4-CDP-2-C-methyl-D-erythritol 2-phosphate = 2-C-methyl-D-erythritol 2,4-cyclic diphosphate + CMP</text>
        <dbReference type="Rhea" id="RHEA:23864"/>
        <dbReference type="ChEBI" id="CHEBI:57919"/>
        <dbReference type="ChEBI" id="CHEBI:58483"/>
        <dbReference type="ChEBI" id="CHEBI:60377"/>
        <dbReference type="EC" id="4.6.1.12"/>
    </reaction>
</comment>
<comment type="cofactor">
    <cofactor evidence="1">
        <name>a divalent metal cation</name>
        <dbReference type="ChEBI" id="CHEBI:60240"/>
    </cofactor>
    <text evidence="1">Binds 1 divalent metal cation per subunit.</text>
</comment>
<comment type="pathway">
    <text evidence="1">Isoprenoid biosynthesis; isopentenyl diphosphate biosynthesis via DXP pathway; isopentenyl diphosphate from 1-deoxy-D-xylulose 5-phosphate: step 4/6.</text>
</comment>
<comment type="subunit">
    <text evidence="1">Homotrimer.</text>
</comment>
<comment type="similarity">
    <text evidence="1">Belongs to the IspF family.</text>
</comment>
<gene>
    <name evidence="1" type="primary">ispF</name>
    <name type="ordered locus">BamMC406_1857</name>
</gene>
<keyword id="KW-0414">Isoprene biosynthesis</keyword>
<keyword id="KW-0456">Lyase</keyword>
<keyword id="KW-0479">Metal-binding</keyword>
<sequence>MDFRIGQGYDVHQLVPGRPLIIGGVTIPYERGLLGHSDADVLLHAITDALFGAAALGDIGRHFSDTDAAFKGADSRVLLRECAARVKAAGFTIQNVDSTVIAQAPKLAPHIDGMRANIAADLGLPLERVNVKAKTNEKLGYLGRGEGIEAQAAALLVKAGA</sequence>
<reference key="1">
    <citation type="submission" date="2008-04" db="EMBL/GenBank/DDBJ databases">
        <title>Complete sequence of chromosome 1 of Burkholderia ambifaria MC40-6.</title>
        <authorList>
            <person name="Copeland A."/>
            <person name="Lucas S."/>
            <person name="Lapidus A."/>
            <person name="Glavina del Rio T."/>
            <person name="Dalin E."/>
            <person name="Tice H."/>
            <person name="Pitluck S."/>
            <person name="Chain P."/>
            <person name="Malfatti S."/>
            <person name="Shin M."/>
            <person name="Vergez L."/>
            <person name="Lang D."/>
            <person name="Schmutz J."/>
            <person name="Larimer F."/>
            <person name="Land M."/>
            <person name="Hauser L."/>
            <person name="Kyrpides N."/>
            <person name="Lykidis A."/>
            <person name="Ramette A."/>
            <person name="Konstantinidis K."/>
            <person name="Tiedje J."/>
            <person name="Richardson P."/>
        </authorList>
    </citation>
    <scope>NUCLEOTIDE SEQUENCE [LARGE SCALE GENOMIC DNA]</scope>
    <source>
        <strain>MC40-6</strain>
    </source>
</reference>
<organism>
    <name type="scientific">Burkholderia ambifaria (strain MC40-6)</name>
    <dbReference type="NCBI Taxonomy" id="398577"/>
    <lineage>
        <taxon>Bacteria</taxon>
        <taxon>Pseudomonadati</taxon>
        <taxon>Pseudomonadota</taxon>
        <taxon>Betaproteobacteria</taxon>
        <taxon>Burkholderiales</taxon>
        <taxon>Burkholderiaceae</taxon>
        <taxon>Burkholderia</taxon>
        <taxon>Burkholderia cepacia complex</taxon>
    </lineage>
</organism>
<evidence type="ECO:0000255" key="1">
    <source>
        <dbReference type="HAMAP-Rule" id="MF_00107"/>
    </source>
</evidence>
<feature type="chain" id="PRO_1000094241" description="2-C-methyl-D-erythritol 2,4-cyclodiphosphate synthase">
    <location>
        <begin position="1"/>
        <end position="161"/>
    </location>
</feature>
<feature type="binding site" evidence="1">
    <location>
        <begin position="10"/>
        <end position="12"/>
    </location>
    <ligand>
        <name>4-CDP-2-C-methyl-D-erythritol 2-phosphate</name>
        <dbReference type="ChEBI" id="CHEBI:57919"/>
    </ligand>
</feature>
<feature type="binding site" evidence="1">
    <location>
        <position position="10"/>
    </location>
    <ligand>
        <name>a divalent metal cation</name>
        <dbReference type="ChEBI" id="CHEBI:60240"/>
    </ligand>
</feature>
<feature type="binding site" evidence="1">
    <location>
        <position position="12"/>
    </location>
    <ligand>
        <name>a divalent metal cation</name>
        <dbReference type="ChEBI" id="CHEBI:60240"/>
    </ligand>
</feature>
<feature type="binding site" evidence="1">
    <location>
        <begin position="36"/>
        <end position="37"/>
    </location>
    <ligand>
        <name>4-CDP-2-C-methyl-D-erythritol 2-phosphate</name>
        <dbReference type="ChEBI" id="CHEBI:57919"/>
    </ligand>
</feature>
<feature type="binding site" evidence="1">
    <location>
        <position position="44"/>
    </location>
    <ligand>
        <name>a divalent metal cation</name>
        <dbReference type="ChEBI" id="CHEBI:60240"/>
    </ligand>
</feature>
<feature type="binding site" evidence="1">
    <location>
        <begin position="58"/>
        <end position="60"/>
    </location>
    <ligand>
        <name>4-CDP-2-C-methyl-D-erythritol 2-phosphate</name>
        <dbReference type="ChEBI" id="CHEBI:57919"/>
    </ligand>
</feature>
<feature type="binding site" evidence="1">
    <location>
        <begin position="63"/>
        <end position="67"/>
    </location>
    <ligand>
        <name>4-CDP-2-C-methyl-D-erythritol 2-phosphate</name>
        <dbReference type="ChEBI" id="CHEBI:57919"/>
    </ligand>
</feature>
<feature type="binding site" evidence="1">
    <location>
        <position position="144"/>
    </location>
    <ligand>
        <name>4-CDP-2-C-methyl-D-erythritol 2-phosphate</name>
        <dbReference type="ChEBI" id="CHEBI:57919"/>
    </ligand>
</feature>
<feature type="site" description="Transition state stabilizer" evidence="1">
    <location>
        <position position="36"/>
    </location>
</feature>
<feature type="site" description="Transition state stabilizer" evidence="1">
    <location>
        <position position="135"/>
    </location>
</feature>